<accession>Q571I9</accession>
<accession>Q3U6I2</accession>
<accession>Q3UMC3</accession>
<accession>Q8C0L4</accession>
<accession>Q8VD78</accession>
<proteinExistence type="evidence at protein level"/>
<feature type="chain" id="PRO_0000312987" description="Aldehyde dehydrogenase family 16 member A1">
    <location>
        <begin position="1"/>
        <end position="802"/>
    </location>
</feature>
<feature type="sequence conflict" description="In Ref. 2; BAE26175." evidence="2" ref="2">
    <original>A</original>
    <variation>T</variation>
    <location>
        <position position="27"/>
    </location>
</feature>
<feature type="sequence conflict" description="In Ref. 1; BAD90125." evidence="2" ref="1">
    <original>V</original>
    <variation>M</variation>
    <location>
        <position position="166"/>
    </location>
</feature>
<feature type="sequence conflict" description="In Ref. 1; BAD90125." evidence="2" ref="1">
    <original>V</original>
    <variation>I</variation>
    <location>
        <position position="186"/>
    </location>
</feature>
<feature type="sequence conflict" description="In Ref. 2; BAC27074/BAE30615/BAE36234/BAE41680 and 3; AAH13548." evidence="2" ref="2 3">
    <original>T</original>
    <variation>M</variation>
    <location>
        <position position="282"/>
    </location>
</feature>
<feature type="sequence conflict" description="In Ref. 2; BAE31742." evidence="2" ref="2">
    <original>E</original>
    <variation>V</variation>
    <location>
        <position position="359"/>
    </location>
</feature>
<feature type="sequence conflict" description="In Ref. 2; BAE31742." evidence="2" ref="2">
    <original>M</original>
    <variation>K</variation>
    <location>
        <position position="405"/>
    </location>
</feature>
<feature type="sequence conflict" description="In Ref. 1; BAD90125, 2; BAC27074/BAE30615/BAE31742/BAE36234/BAE41680 and 3; AAH13548." evidence="2" ref="1 2 3">
    <original>T</original>
    <variation>I</variation>
    <location>
        <position position="622"/>
    </location>
</feature>
<feature type="sequence conflict" description="In Ref. 2; BAC27074." evidence="2" ref="2">
    <original>R</original>
    <variation>K</variation>
    <location>
        <position position="773"/>
    </location>
</feature>
<sequence length="802" mass="84756">MAATRVQPSTREIFTTLEYGPVPESHACALAWLDTHNRLLGHHVNGMWLKPEHRNPAPCQDPITGENLASCLQAEAEDIAAAVEAAKIAFKAWSQLPGAARGQHLTRLAKVVQKHQRLLWTLESLVTGRAVREVRDGDVPLAQQLLQYHAVQAHAQGDALADWQPVGVIGLILPTPFSFLDMMWRVCPALAMGCTVVALVPPAFPTPLLLAQLAGELGSFPGILNVVCGPASLGPVLASQPGVQKVAFCGAVEEGRVLRRTLAGRGAELGLALGTESLLLLTDSADVDSAVEGVVDAVWSDRSLGGLRLLIQESVWDEAMRRLQARMAQIRSGRGLDGAVDMGARGAAARDLAQSFVDEAQSQGGQVFQAGDVPSSSPFFSPALVSGLPPAAPCAQAEVPWPVVMASPFRTVKEALALANGTPRGGSASVWSERLGQALELGYGLQVGTVWINAHGLRDPAVPTGGCKESGSSWHGGPDGLYEYLQPLGTPSQESFLCENINYDTFGLAASSILPSGPETGPSPAPPYGLFVGGRFQSPGTQSSRPIQDSSGKVSSYVAEGGAKDIRGAVEAAHQAAPGWGAQSPRARAGLLWALAAALERRKPVLTSQLERHGAAPTVAKTEVELSVRRLQTWGTRVQDQGQTLQVTGLRGPVLRLREPLGVLAVVCPDEWPLLAFVSLLAPALAHGNAVVLVPSGACPLLALEVCQDIAPLFPAGLVSVVTGDRDHLTRCLALHQDVQALWYFGSAQGSQFVEWASAGNLKSVWVNRGFPRAWDVEVQGAGQELSLHAARTKALWLPMGD</sequence>
<comment type="subunit">
    <text evidence="1">Interacts with SPG21.</text>
</comment>
<comment type="similarity">
    <text evidence="2">Belongs to the aldehyde dehydrogenase family.</text>
</comment>
<comment type="caution">
    <text evidence="2">The active site cysteine and glutamate residues are not conserved in this protein. Its activity is therefore unsure.</text>
</comment>
<comment type="sequence caution" evidence="2">
    <conflict type="erroneous initiation">
        <sequence resource="EMBL-CDS" id="BAD90125"/>
    </conflict>
</comment>
<evidence type="ECO:0000250" key="1"/>
<evidence type="ECO:0000305" key="2"/>
<gene>
    <name type="primary">Aldh16a1</name>
</gene>
<keyword id="KW-1185">Reference proteome</keyword>
<protein>
    <recommendedName>
        <fullName>Aldehyde dehydrogenase family 16 member A1</fullName>
    </recommendedName>
</protein>
<reference key="1">
    <citation type="submission" date="2005-02" db="EMBL/GenBank/DDBJ databases">
        <title>Prediction of the coding sequences of mouse homologues of KIAA gene. The complete nucleotide sequences of mouse KIAA-homologous cDNAs identified by screening of terminal sequences of cDNA clones randomly sampled from size-fractionated libraries.</title>
        <authorList>
            <person name="Okazaki N."/>
            <person name="Kikuno R.F."/>
            <person name="Ohara R."/>
            <person name="Inamoto S."/>
            <person name="Nagase T."/>
            <person name="Ohara O."/>
            <person name="Koga H."/>
        </authorList>
    </citation>
    <scope>NUCLEOTIDE SEQUENCE [LARGE SCALE MRNA]</scope>
    <source>
        <tissue>Spleen</tissue>
    </source>
</reference>
<reference key="2">
    <citation type="journal article" date="2005" name="Science">
        <title>The transcriptional landscape of the mammalian genome.</title>
        <authorList>
            <person name="Carninci P."/>
            <person name="Kasukawa T."/>
            <person name="Katayama S."/>
            <person name="Gough J."/>
            <person name="Frith M.C."/>
            <person name="Maeda N."/>
            <person name="Oyama R."/>
            <person name="Ravasi T."/>
            <person name="Lenhard B."/>
            <person name="Wells C."/>
            <person name="Kodzius R."/>
            <person name="Shimokawa K."/>
            <person name="Bajic V.B."/>
            <person name="Brenner S.E."/>
            <person name="Batalov S."/>
            <person name="Forrest A.R."/>
            <person name="Zavolan M."/>
            <person name="Davis M.J."/>
            <person name="Wilming L.G."/>
            <person name="Aidinis V."/>
            <person name="Allen J.E."/>
            <person name="Ambesi-Impiombato A."/>
            <person name="Apweiler R."/>
            <person name="Aturaliya R.N."/>
            <person name="Bailey T.L."/>
            <person name="Bansal M."/>
            <person name="Baxter L."/>
            <person name="Beisel K.W."/>
            <person name="Bersano T."/>
            <person name="Bono H."/>
            <person name="Chalk A.M."/>
            <person name="Chiu K.P."/>
            <person name="Choudhary V."/>
            <person name="Christoffels A."/>
            <person name="Clutterbuck D.R."/>
            <person name="Crowe M.L."/>
            <person name="Dalla E."/>
            <person name="Dalrymple B.P."/>
            <person name="de Bono B."/>
            <person name="Della Gatta G."/>
            <person name="di Bernardo D."/>
            <person name="Down T."/>
            <person name="Engstrom P."/>
            <person name="Fagiolini M."/>
            <person name="Faulkner G."/>
            <person name="Fletcher C.F."/>
            <person name="Fukushima T."/>
            <person name="Furuno M."/>
            <person name="Futaki S."/>
            <person name="Gariboldi M."/>
            <person name="Georgii-Hemming P."/>
            <person name="Gingeras T.R."/>
            <person name="Gojobori T."/>
            <person name="Green R.E."/>
            <person name="Gustincich S."/>
            <person name="Harbers M."/>
            <person name="Hayashi Y."/>
            <person name="Hensch T.K."/>
            <person name="Hirokawa N."/>
            <person name="Hill D."/>
            <person name="Huminiecki L."/>
            <person name="Iacono M."/>
            <person name="Ikeo K."/>
            <person name="Iwama A."/>
            <person name="Ishikawa T."/>
            <person name="Jakt M."/>
            <person name="Kanapin A."/>
            <person name="Katoh M."/>
            <person name="Kawasawa Y."/>
            <person name="Kelso J."/>
            <person name="Kitamura H."/>
            <person name="Kitano H."/>
            <person name="Kollias G."/>
            <person name="Krishnan S.P."/>
            <person name="Kruger A."/>
            <person name="Kummerfeld S.K."/>
            <person name="Kurochkin I.V."/>
            <person name="Lareau L.F."/>
            <person name="Lazarevic D."/>
            <person name="Lipovich L."/>
            <person name="Liu J."/>
            <person name="Liuni S."/>
            <person name="McWilliam S."/>
            <person name="Madan Babu M."/>
            <person name="Madera M."/>
            <person name="Marchionni L."/>
            <person name="Matsuda H."/>
            <person name="Matsuzawa S."/>
            <person name="Miki H."/>
            <person name="Mignone F."/>
            <person name="Miyake S."/>
            <person name="Morris K."/>
            <person name="Mottagui-Tabar S."/>
            <person name="Mulder N."/>
            <person name="Nakano N."/>
            <person name="Nakauchi H."/>
            <person name="Ng P."/>
            <person name="Nilsson R."/>
            <person name="Nishiguchi S."/>
            <person name="Nishikawa S."/>
            <person name="Nori F."/>
            <person name="Ohara O."/>
            <person name="Okazaki Y."/>
            <person name="Orlando V."/>
            <person name="Pang K.C."/>
            <person name="Pavan W.J."/>
            <person name="Pavesi G."/>
            <person name="Pesole G."/>
            <person name="Petrovsky N."/>
            <person name="Piazza S."/>
            <person name="Reed J."/>
            <person name="Reid J.F."/>
            <person name="Ring B.Z."/>
            <person name="Ringwald M."/>
            <person name="Rost B."/>
            <person name="Ruan Y."/>
            <person name="Salzberg S.L."/>
            <person name="Sandelin A."/>
            <person name="Schneider C."/>
            <person name="Schoenbach C."/>
            <person name="Sekiguchi K."/>
            <person name="Semple C.A."/>
            <person name="Seno S."/>
            <person name="Sessa L."/>
            <person name="Sheng Y."/>
            <person name="Shibata Y."/>
            <person name="Shimada H."/>
            <person name="Shimada K."/>
            <person name="Silva D."/>
            <person name="Sinclair B."/>
            <person name="Sperling S."/>
            <person name="Stupka E."/>
            <person name="Sugiura K."/>
            <person name="Sultana R."/>
            <person name="Takenaka Y."/>
            <person name="Taki K."/>
            <person name="Tammoja K."/>
            <person name="Tan S.L."/>
            <person name="Tang S."/>
            <person name="Taylor M.S."/>
            <person name="Tegner J."/>
            <person name="Teichmann S.A."/>
            <person name="Ueda H.R."/>
            <person name="van Nimwegen E."/>
            <person name="Verardo R."/>
            <person name="Wei C.L."/>
            <person name="Yagi K."/>
            <person name="Yamanishi H."/>
            <person name="Zabarovsky E."/>
            <person name="Zhu S."/>
            <person name="Zimmer A."/>
            <person name="Hide W."/>
            <person name="Bult C."/>
            <person name="Grimmond S.M."/>
            <person name="Teasdale R.D."/>
            <person name="Liu E.T."/>
            <person name="Brusic V."/>
            <person name="Quackenbush J."/>
            <person name="Wahlestedt C."/>
            <person name="Mattick J.S."/>
            <person name="Hume D.A."/>
            <person name="Kai C."/>
            <person name="Sasaki D."/>
            <person name="Tomaru Y."/>
            <person name="Fukuda S."/>
            <person name="Kanamori-Katayama M."/>
            <person name="Suzuki M."/>
            <person name="Aoki J."/>
            <person name="Arakawa T."/>
            <person name="Iida J."/>
            <person name="Imamura K."/>
            <person name="Itoh M."/>
            <person name="Kato T."/>
            <person name="Kawaji H."/>
            <person name="Kawagashira N."/>
            <person name="Kawashima T."/>
            <person name="Kojima M."/>
            <person name="Kondo S."/>
            <person name="Konno H."/>
            <person name="Nakano K."/>
            <person name="Ninomiya N."/>
            <person name="Nishio T."/>
            <person name="Okada M."/>
            <person name="Plessy C."/>
            <person name="Shibata K."/>
            <person name="Shiraki T."/>
            <person name="Suzuki S."/>
            <person name="Tagami M."/>
            <person name="Waki K."/>
            <person name="Watahiki A."/>
            <person name="Okamura-Oho Y."/>
            <person name="Suzuki H."/>
            <person name="Kawai J."/>
            <person name="Hayashizaki Y."/>
        </authorList>
    </citation>
    <scope>NUCLEOTIDE SEQUENCE [LARGE SCALE MRNA]</scope>
    <source>
        <strain>C57BL/6J</strain>
        <strain>NOD</strain>
        <tissue>Bone marrow macrophage</tissue>
        <tissue>Dendritic cell</tissue>
        <tissue>Head</tissue>
        <tissue>Mammary gland</tissue>
    </source>
</reference>
<reference key="3">
    <citation type="journal article" date="2004" name="Genome Res.">
        <title>The status, quality, and expansion of the NIH full-length cDNA project: the Mammalian Gene Collection (MGC).</title>
        <authorList>
            <consortium name="The MGC Project Team"/>
        </authorList>
    </citation>
    <scope>NUCLEOTIDE SEQUENCE [LARGE SCALE MRNA]</scope>
    <source>
        <strain>FVB/N</strain>
        <tissue>Kidney</tissue>
    </source>
</reference>
<reference key="4">
    <citation type="journal article" date="2010" name="Cell">
        <title>A tissue-specific atlas of mouse protein phosphorylation and expression.</title>
        <authorList>
            <person name="Huttlin E.L."/>
            <person name="Jedrychowski M.P."/>
            <person name="Elias J.E."/>
            <person name="Goswami T."/>
            <person name="Rad R."/>
            <person name="Beausoleil S.A."/>
            <person name="Villen J."/>
            <person name="Haas W."/>
            <person name="Sowa M.E."/>
            <person name="Gygi S.P."/>
        </authorList>
    </citation>
    <scope>IDENTIFICATION BY MASS SPECTROMETRY [LARGE SCALE ANALYSIS]</scope>
    <source>
        <tissue>Brain</tissue>
        <tissue>Brown adipose tissue</tissue>
        <tissue>Heart</tissue>
        <tissue>Kidney</tissue>
        <tissue>Liver</tissue>
        <tissue>Lung</tissue>
        <tissue>Pancreas</tissue>
        <tissue>Spleen</tissue>
        <tissue>Testis</tissue>
    </source>
</reference>
<dbReference type="EMBL" id="AK220200">
    <property type="protein sequence ID" value="BAD90125.1"/>
    <property type="status" value="ALT_INIT"/>
    <property type="molecule type" value="mRNA"/>
</dbReference>
<dbReference type="EMBL" id="AK030673">
    <property type="protein sequence ID" value="BAC27074.1"/>
    <property type="molecule type" value="mRNA"/>
</dbReference>
<dbReference type="EMBL" id="AK144995">
    <property type="protein sequence ID" value="BAE26175.1"/>
    <property type="molecule type" value="mRNA"/>
</dbReference>
<dbReference type="EMBL" id="AK151691">
    <property type="protein sequence ID" value="BAE30615.1"/>
    <property type="molecule type" value="mRNA"/>
</dbReference>
<dbReference type="EMBL" id="AK153129">
    <property type="protein sequence ID" value="BAE31742.1"/>
    <property type="molecule type" value="mRNA"/>
</dbReference>
<dbReference type="EMBL" id="AK161198">
    <property type="protein sequence ID" value="BAE36234.1"/>
    <property type="molecule type" value="mRNA"/>
</dbReference>
<dbReference type="EMBL" id="AK170276">
    <property type="protein sequence ID" value="BAE41680.1"/>
    <property type="molecule type" value="mRNA"/>
</dbReference>
<dbReference type="EMBL" id="BC013548">
    <property type="protein sequence ID" value="AAH13548.2"/>
    <property type="molecule type" value="mRNA"/>
</dbReference>
<dbReference type="CCDS" id="CCDS21231.1"/>
<dbReference type="RefSeq" id="NP_666066.1">
    <property type="nucleotide sequence ID" value="NM_145954.1"/>
</dbReference>
<dbReference type="SMR" id="Q571I9"/>
<dbReference type="BioGRID" id="213654">
    <property type="interactions" value="2"/>
</dbReference>
<dbReference type="FunCoup" id="Q571I9">
    <property type="interactions" value="172"/>
</dbReference>
<dbReference type="IntAct" id="Q571I9">
    <property type="interactions" value="3"/>
</dbReference>
<dbReference type="STRING" id="10090.ENSMUSP00000148069"/>
<dbReference type="GlyGen" id="Q571I9">
    <property type="glycosylation" value="1 site"/>
</dbReference>
<dbReference type="iPTMnet" id="Q571I9"/>
<dbReference type="PhosphoSitePlus" id="Q571I9"/>
<dbReference type="SwissPalm" id="Q571I9"/>
<dbReference type="jPOST" id="Q571I9"/>
<dbReference type="PaxDb" id="10090-ENSMUSP00000007977"/>
<dbReference type="ProteomicsDB" id="285739"/>
<dbReference type="Pumba" id="Q571I9"/>
<dbReference type="ABCD" id="Q571I9">
    <property type="antibodies" value="5 sequenced antibodies"/>
</dbReference>
<dbReference type="GeneID" id="69748"/>
<dbReference type="KEGG" id="mmu:69748"/>
<dbReference type="UCSC" id="uc009gtr.1">
    <property type="organism name" value="mouse"/>
</dbReference>
<dbReference type="AGR" id="MGI:1916998"/>
<dbReference type="CTD" id="126133"/>
<dbReference type="MGI" id="MGI:1916998">
    <property type="gene designation" value="Aldh16a1"/>
</dbReference>
<dbReference type="eggNOG" id="KOG2450">
    <property type="taxonomic scope" value="Eukaryota"/>
</dbReference>
<dbReference type="InParanoid" id="Q571I9"/>
<dbReference type="OrthoDB" id="310895at2759"/>
<dbReference type="PhylomeDB" id="Q571I9"/>
<dbReference type="TreeFam" id="TF329461"/>
<dbReference type="BioGRID-ORCS" id="69748">
    <property type="hits" value="3 hits in 45 CRISPR screens"/>
</dbReference>
<dbReference type="ChiTaRS" id="Aldh16a1">
    <property type="organism name" value="mouse"/>
</dbReference>
<dbReference type="PRO" id="PR:Q571I9"/>
<dbReference type="Proteomes" id="UP000000589">
    <property type="component" value="Unplaced"/>
</dbReference>
<dbReference type="RNAct" id="Q571I9">
    <property type="molecule type" value="protein"/>
</dbReference>
<dbReference type="GO" id="GO:0016620">
    <property type="term" value="F:oxidoreductase activity, acting on the aldehyde or oxo group of donors, NAD or NADP as acceptor"/>
    <property type="evidence" value="ECO:0007669"/>
    <property type="project" value="InterPro"/>
</dbReference>
<dbReference type="Gene3D" id="3.40.605.10">
    <property type="entry name" value="Aldehyde Dehydrogenase, Chain A, domain 1"/>
    <property type="match status" value="2"/>
</dbReference>
<dbReference type="Gene3D" id="3.40.309.10">
    <property type="entry name" value="Aldehyde Dehydrogenase, Chain A, domain 2"/>
    <property type="match status" value="1"/>
</dbReference>
<dbReference type="InterPro" id="IPR016161">
    <property type="entry name" value="Ald_DH/histidinol_DH"/>
</dbReference>
<dbReference type="InterPro" id="IPR016163">
    <property type="entry name" value="Ald_DH_C"/>
</dbReference>
<dbReference type="InterPro" id="IPR016162">
    <property type="entry name" value="Ald_DH_N"/>
</dbReference>
<dbReference type="InterPro" id="IPR011408">
    <property type="entry name" value="Aldehyde_DH"/>
</dbReference>
<dbReference type="InterPro" id="IPR015590">
    <property type="entry name" value="Aldehyde_DH_dom"/>
</dbReference>
<dbReference type="PANTHER" id="PTHR11699">
    <property type="entry name" value="ALDEHYDE DEHYDROGENASE-RELATED"/>
    <property type="match status" value="1"/>
</dbReference>
<dbReference type="Pfam" id="PF00171">
    <property type="entry name" value="Aldedh"/>
    <property type="match status" value="2"/>
</dbReference>
<dbReference type="PIRSF" id="PIRSF036490">
    <property type="entry name" value="Aldedh_dupl"/>
    <property type="match status" value="1"/>
</dbReference>
<dbReference type="SUPFAM" id="SSF53720">
    <property type="entry name" value="ALDH-like"/>
    <property type="match status" value="2"/>
</dbReference>
<organism>
    <name type="scientific">Mus musculus</name>
    <name type="common">Mouse</name>
    <dbReference type="NCBI Taxonomy" id="10090"/>
    <lineage>
        <taxon>Eukaryota</taxon>
        <taxon>Metazoa</taxon>
        <taxon>Chordata</taxon>
        <taxon>Craniata</taxon>
        <taxon>Vertebrata</taxon>
        <taxon>Euteleostomi</taxon>
        <taxon>Mammalia</taxon>
        <taxon>Eutheria</taxon>
        <taxon>Euarchontoglires</taxon>
        <taxon>Glires</taxon>
        <taxon>Rodentia</taxon>
        <taxon>Myomorpha</taxon>
        <taxon>Muroidea</taxon>
        <taxon>Muridae</taxon>
        <taxon>Murinae</taxon>
        <taxon>Mus</taxon>
        <taxon>Mus</taxon>
    </lineage>
</organism>
<name>A16A1_MOUSE</name>